<keyword id="KW-0067">ATP-binding</keyword>
<keyword id="KW-0963">Cytoplasm</keyword>
<keyword id="KW-0436">Ligase</keyword>
<keyword id="KW-0547">Nucleotide-binding</keyword>
<keyword id="KW-0566">Pantothenate biosynthesis</keyword>
<keyword id="KW-1185">Reference proteome</keyword>
<evidence type="ECO:0000255" key="1">
    <source>
        <dbReference type="HAMAP-Rule" id="MF_00158"/>
    </source>
</evidence>
<accession>Q97F38</accession>
<dbReference type="EC" id="6.3.2.1" evidence="1"/>
<dbReference type="EMBL" id="AE001437">
    <property type="protein sequence ID" value="AAK80857.1"/>
    <property type="molecule type" value="Genomic_DNA"/>
</dbReference>
<dbReference type="PIR" id="F97258">
    <property type="entry name" value="F97258"/>
</dbReference>
<dbReference type="RefSeq" id="NP_349517.1">
    <property type="nucleotide sequence ID" value="NC_003030.1"/>
</dbReference>
<dbReference type="RefSeq" id="WP_010966198.1">
    <property type="nucleotide sequence ID" value="NC_003030.1"/>
</dbReference>
<dbReference type="SMR" id="Q97F38"/>
<dbReference type="STRING" id="272562.CA_C2915"/>
<dbReference type="GeneID" id="44999403"/>
<dbReference type="KEGG" id="cac:CA_C2915"/>
<dbReference type="PATRIC" id="fig|272562.8.peg.3099"/>
<dbReference type="eggNOG" id="COG0414">
    <property type="taxonomic scope" value="Bacteria"/>
</dbReference>
<dbReference type="HOGENOM" id="CLU_047148_0_0_9"/>
<dbReference type="OrthoDB" id="9773087at2"/>
<dbReference type="UniPathway" id="UPA00028">
    <property type="reaction ID" value="UER00005"/>
</dbReference>
<dbReference type="Proteomes" id="UP000000814">
    <property type="component" value="Chromosome"/>
</dbReference>
<dbReference type="GO" id="GO:0005829">
    <property type="term" value="C:cytosol"/>
    <property type="evidence" value="ECO:0007669"/>
    <property type="project" value="TreeGrafter"/>
</dbReference>
<dbReference type="GO" id="GO:0005524">
    <property type="term" value="F:ATP binding"/>
    <property type="evidence" value="ECO:0007669"/>
    <property type="project" value="UniProtKB-KW"/>
</dbReference>
<dbReference type="GO" id="GO:0004592">
    <property type="term" value="F:pantoate-beta-alanine ligase activity"/>
    <property type="evidence" value="ECO:0007669"/>
    <property type="project" value="UniProtKB-UniRule"/>
</dbReference>
<dbReference type="GO" id="GO:0015940">
    <property type="term" value="P:pantothenate biosynthetic process"/>
    <property type="evidence" value="ECO:0007669"/>
    <property type="project" value="UniProtKB-UniRule"/>
</dbReference>
<dbReference type="CDD" id="cd00560">
    <property type="entry name" value="PanC"/>
    <property type="match status" value="1"/>
</dbReference>
<dbReference type="FunFam" id="3.30.1300.10:FF:000001">
    <property type="entry name" value="Pantothenate synthetase"/>
    <property type="match status" value="1"/>
</dbReference>
<dbReference type="FunFam" id="3.40.50.620:FF:000013">
    <property type="entry name" value="Pantothenate synthetase"/>
    <property type="match status" value="1"/>
</dbReference>
<dbReference type="Gene3D" id="3.40.50.620">
    <property type="entry name" value="HUPs"/>
    <property type="match status" value="1"/>
</dbReference>
<dbReference type="Gene3D" id="3.30.1300.10">
    <property type="entry name" value="Pantoate-beta-alanine ligase, C-terminal domain"/>
    <property type="match status" value="1"/>
</dbReference>
<dbReference type="HAMAP" id="MF_00158">
    <property type="entry name" value="PanC"/>
    <property type="match status" value="1"/>
</dbReference>
<dbReference type="InterPro" id="IPR004821">
    <property type="entry name" value="Cyt_trans-like"/>
</dbReference>
<dbReference type="InterPro" id="IPR003721">
    <property type="entry name" value="Pantoate_ligase"/>
</dbReference>
<dbReference type="InterPro" id="IPR042176">
    <property type="entry name" value="Pantoate_ligase_C"/>
</dbReference>
<dbReference type="InterPro" id="IPR014729">
    <property type="entry name" value="Rossmann-like_a/b/a_fold"/>
</dbReference>
<dbReference type="NCBIfam" id="TIGR00125">
    <property type="entry name" value="cyt_tran_rel"/>
    <property type="match status" value="1"/>
</dbReference>
<dbReference type="NCBIfam" id="TIGR00018">
    <property type="entry name" value="panC"/>
    <property type="match status" value="1"/>
</dbReference>
<dbReference type="PANTHER" id="PTHR21299">
    <property type="entry name" value="CYTIDYLATE KINASE/PANTOATE-BETA-ALANINE LIGASE"/>
    <property type="match status" value="1"/>
</dbReference>
<dbReference type="PANTHER" id="PTHR21299:SF1">
    <property type="entry name" value="PANTOATE--BETA-ALANINE LIGASE"/>
    <property type="match status" value="1"/>
</dbReference>
<dbReference type="Pfam" id="PF02569">
    <property type="entry name" value="Pantoate_ligase"/>
    <property type="match status" value="1"/>
</dbReference>
<dbReference type="SUPFAM" id="SSF52374">
    <property type="entry name" value="Nucleotidylyl transferase"/>
    <property type="match status" value="1"/>
</dbReference>
<name>PANC_CLOAB</name>
<feature type="chain" id="PRO_0000128221" description="Pantothenate synthetase">
    <location>
        <begin position="1"/>
        <end position="281"/>
    </location>
</feature>
<feature type="active site" description="Proton donor" evidence="1">
    <location>
        <position position="37"/>
    </location>
</feature>
<feature type="binding site" evidence="1">
    <location>
        <begin position="30"/>
        <end position="37"/>
    </location>
    <ligand>
        <name>ATP</name>
        <dbReference type="ChEBI" id="CHEBI:30616"/>
    </ligand>
</feature>
<feature type="binding site" evidence="1">
    <location>
        <position position="61"/>
    </location>
    <ligand>
        <name>(R)-pantoate</name>
        <dbReference type="ChEBI" id="CHEBI:15980"/>
    </ligand>
</feature>
<feature type="binding site" evidence="1">
    <location>
        <position position="61"/>
    </location>
    <ligand>
        <name>beta-alanine</name>
        <dbReference type="ChEBI" id="CHEBI:57966"/>
    </ligand>
</feature>
<feature type="binding site" evidence="1">
    <location>
        <begin position="147"/>
        <end position="150"/>
    </location>
    <ligand>
        <name>ATP</name>
        <dbReference type="ChEBI" id="CHEBI:30616"/>
    </ligand>
</feature>
<feature type="binding site" evidence="1">
    <location>
        <position position="153"/>
    </location>
    <ligand>
        <name>(R)-pantoate</name>
        <dbReference type="ChEBI" id="CHEBI:15980"/>
    </ligand>
</feature>
<feature type="binding site" evidence="1">
    <location>
        <position position="176"/>
    </location>
    <ligand>
        <name>ATP</name>
        <dbReference type="ChEBI" id="CHEBI:30616"/>
    </ligand>
</feature>
<feature type="binding site" evidence="1">
    <location>
        <begin position="184"/>
        <end position="187"/>
    </location>
    <ligand>
        <name>ATP</name>
        <dbReference type="ChEBI" id="CHEBI:30616"/>
    </ligand>
</feature>
<sequence>MEILHSISDVKKYIKQWKKEGLTIGLVPTMGYLHDGHKSLIERASKENDKVIVSDFVNPIQFGPNEDLDVYPRDLDRDAEVCTKAGASILFNPEPSEMYFDDAVTFVNSSKITDILCGARRPGHFRGVCTVVTKLFNITCPDRAYFGEKDAQQVAVIKRMVRDLNFDIEIVACPIIREEDGLAKSSRNSYLSSEERKAATILSKSLNLAKELLDNGEKNVYNIKKAIIIEIGKEPLAKIDYVEVVDSLSLKSVSKVQQSILVAIAVYIGKIRLIDNFTWNI</sequence>
<protein>
    <recommendedName>
        <fullName evidence="1">Pantothenate synthetase</fullName>
        <shortName evidence="1">PS</shortName>
        <ecNumber evidence="1">6.3.2.1</ecNumber>
    </recommendedName>
    <alternativeName>
        <fullName evidence="1">Pantoate--beta-alanine ligase</fullName>
    </alternativeName>
    <alternativeName>
        <fullName evidence="1">Pantoate-activating enzyme</fullName>
    </alternativeName>
</protein>
<comment type="function">
    <text evidence="1">Catalyzes the condensation of pantoate with beta-alanine in an ATP-dependent reaction via a pantoyl-adenylate intermediate.</text>
</comment>
<comment type="catalytic activity">
    <reaction evidence="1">
        <text>(R)-pantoate + beta-alanine + ATP = (R)-pantothenate + AMP + diphosphate + H(+)</text>
        <dbReference type="Rhea" id="RHEA:10912"/>
        <dbReference type="ChEBI" id="CHEBI:15378"/>
        <dbReference type="ChEBI" id="CHEBI:15980"/>
        <dbReference type="ChEBI" id="CHEBI:29032"/>
        <dbReference type="ChEBI" id="CHEBI:30616"/>
        <dbReference type="ChEBI" id="CHEBI:33019"/>
        <dbReference type="ChEBI" id="CHEBI:57966"/>
        <dbReference type="ChEBI" id="CHEBI:456215"/>
        <dbReference type="EC" id="6.3.2.1"/>
    </reaction>
</comment>
<comment type="pathway">
    <text evidence="1">Cofactor biosynthesis; (R)-pantothenate biosynthesis; (R)-pantothenate from (R)-pantoate and beta-alanine: step 1/1.</text>
</comment>
<comment type="subunit">
    <text evidence="1">Homodimer.</text>
</comment>
<comment type="subcellular location">
    <subcellularLocation>
        <location evidence="1">Cytoplasm</location>
    </subcellularLocation>
</comment>
<comment type="miscellaneous">
    <text evidence="1">The reaction proceeds by a bi uni uni bi ping pong mechanism.</text>
</comment>
<comment type="similarity">
    <text evidence="1">Belongs to the pantothenate synthetase family.</text>
</comment>
<proteinExistence type="inferred from homology"/>
<organism>
    <name type="scientific">Clostridium acetobutylicum (strain ATCC 824 / DSM 792 / JCM 1419 / IAM 19013 / LMG 5710 / NBRC 13948 / NRRL B-527 / VKM B-1787 / 2291 / W)</name>
    <dbReference type="NCBI Taxonomy" id="272562"/>
    <lineage>
        <taxon>Bacteria</taxon>
        <taxon>Bacillati</taxon>
        <taxon>Bacillota</taxon>
        <taxon>Clostridia</taxon>
        <taxon>Eubacteriales</taxon>
        <taxon>Clostridiaceae</taxon>
        <taxon>Clostridium</taxon>
    </lineage>
</organism>
<reference key="1">
    <citation type="journal article" date="2001" name="J. Bacteriol.">
        <title>Genome sequence and comparative analysis of the solvent-producing bacterium Clostridium acetobutylicum.</title>
        <authorList>
            <person name="Noelling J."/>
            <person name="Breton G."/>
            <person name="Omelchenko M.V."/>
            <person name="Makarova K.S."/>
            <person name="Zeng Q."/>
            <person name="Gibson R."/>
            <person name="Lee H.M."/>
            <person name="Dubois J."/>
            <person name="Qiu D."/>
            <person name="Hitti J."/>
            <person name="Wolf Y.I."/>
            <person name="Tatusov R.L."/>
            <person name="Sabathe F."/>
            <person name="Doucette-Stamm L.A."/>
            <person name="Soucaille P."/>
            <person name="Daly M.J."/>
            <person name="Bennett G.N."/>
            <person name="Koonin E.V."/>
            <person name="Smith D.R."/>
        </authorList>
    </citation>
    <scope>NUCLEOTIDE SEQUENCE [LARGE SCALE GENOMIC DNA]</scope>
    <source>
        <strain>ATCC 824 / DSM 792 / JCM 1419 / IAM 19013 / LMG 5710 / NBRC 13948 / NRRL B-527 / VKM B-1787 / 2291 / W</strain>
    </source>
</reference>
<gene>
    <name evidence="1" type="primary">panC</name>
    <name type="ordered locus">CA_C2915</name>
</gene>